<accession>Q1J217</accession>
<proteinExistence type="inferred from homology"/>
<comment type="function">
    <text evidence="1">Binds as a heterodimer with protein bS6 to the central domain of the 16S rRNA, where it helps stabilize the platform of the 30S subunit.</text>
</comment>
<comment type="subunit">
    <text evidence="1">Part of the 30S ribosomal subunit. Forms a tight heterodimer with protein bS6.</text>
</comment>
<comment type="similarity">
    <text evidence="1">Belongs to the bacterial ribosomal protein bS18 family.</text>
</comment>
<gene>
    <name evidence="1" type="primary">rpsR</name>
    <name type="ordered locus">Dgeo_0164</name>
</gene>
<keyword id="KW-0687">Ribonucleoprotein</keyword>
<keyword id="KW-0689">Ribosomal protein</keyword>
<keyword id="KW-0694">RNA-binding</keyword>
<keyword id="KW-0699">rRNA-binding</keyword>
<dbReference type="EMBL" id="CP000359">
    <property type="protein sequence ID" value="ABF44467.1"/>
    <property type="molecule type" value="Genomic_DNA"/>
</dbReference>
<dbReference type="RefSeq" id="WP_011529314.1">
    <property type="nucleotide sequence ID" value="NC_008025.1"/>
</dbReference>
<dbReference type="SMR" id="Q1J217"/>
<dbReference type="STRING" id="319795.Dgeo_0164"/>
<dbReference type="KEGG" id="dge:Dgeo_0164"/>
<dbReference type="eggNOG" id="COG0238">
    <property type="taxonomic scope" value="Bacteria"/>
</dbReference>
<dbReference type="HOGENOM" id="CLU_148710_0_3_0"/>
<dbReference type="Proteomes" id="UP000002431">
    <property type="component" value="Chromosome"/>
</dbReference>
<dbReference type="GO" id="GO:0022627">
    <property type="term" value="C:cytosolic small ribosomal subunit"/>
    <property type="evidence" value="ECO:0007669"/>
    <property type="project" value="TreeGrafter"/>
</dbReference>
<dbReference type="GO" id="GO:0070181">
    <property type="term" value="F:small ribosomal subunit rRNA binding"/>
    <property type="evidence" value="ECO:0007669"/>
    <property type="project" value="TreeGrafter"/>
</dbReference>
<dbReference type="GO" id="GO:0003735">
    <property type="term" value="F:structural constituent of ribosome"/>
    <property type="evidence" value="ECO:0007669"/>
    <property type="project" value="InterPro"/>
</dbReference>
<dbReference type="GO" id="GO:0006412">
    <property type="term" value="P:translation"/>
    <property type="evidence" value="ECO:0007669"/>
    <property type="project" value="UniProtKB-UniRule"/>
</dbReference>
<dbReference type="FunFam" id="4.10.640.10:FF:000015">
    <property type="entry name" value="30S ribosomal protein S18"/>
    <property type="match status" value="1"/>
</dbReference>
<dbReference type="Gene3D" id="4.10.640.10">
    <property type="entry name" value="Ribosomal protein S18"/>
    <property type="match status" value="1"/>
</dbReference>
<dbReference type="HAMAP" id="MF_00270">
    <property type="entry name" value="Ribosomal_bS18"/>
    <property type="match status" value="1"/>
</dbReference>
<dbReference type="InterPro" id="IPR001648">
    <property type="entry name" value="Ribosomal_bS18"/>
</dbReference>
<dbReference type="InterPro" id="IPR036870">
    <property type="entry name" value="Ribosomal_bS18_sf"/>
</dbReference>
<dbReference type="NCBIfam" id="TIGR00165">
    <property type="entry name" value="S18"/>
    <property type="match status" value="1"/>
</dbReference>
<dbReference type="PANTHER" id="PTHR13479">
    <property type="entry name" value="30S RIBOSOMAL PROTEIN S18"/>
    <property type="match status" value="1"/>
</dbReference>
<dbReference type="PANTHER" id="PTHR13479:SF40">
    <property type="entry name" value="SMALL RIBOSOMAL SUBUNIT PROTEIN BS18M"/>
    <property type="match status" value="1"/>
</dbReference>
<dbReference type="Pfam" id="PF01084">
    <property type="entry name" value="Ribosomal_S18"/>
    <property type="match status" value="1"/>
</dbReference>
<dbReference type="PRINTS" id="PR00974">
    <property type="entry name" value="RIBOSOMALS18"/>
</dbReference>
<dbReference type="SUPFAM" id="SSF46911">
    <property type="entry name" value="Ribosomal protein S18"/>
    <property type="match status" value="1"/>
</dbReference>
<organism>
    <name type="scientific">Deinococcus geothermalis (strain DSM 11300 / CIP 105573 / AG-3a)</name>
    <dbReference type="NCBI Taxonomy" id="319795"/>
    <lineage>
        <taxon>Bacteria</taxon>
        <taxon>Thermotogati</taxon>
        <taxon>Deinococcota</taxon>
        <taxon>Deinococci</taxon>
        <taxon>Deinococcales</taxon>
        <taxon>Deinococcaceae</taxon>
        <taxon>Deinococcus</taxon>
    </lineage>
</organism>
<protein>
    <recommendedName>
        <fullName evidence="1">Small ribosomal subunit protein bS18</fullName>
    </recommendedName>
    <alternativeName>
        <fullName evidence="3">30S ribosomal protein S18</fullName>
    </alternativeName>
</protein>
<evidence type="ECO:0000255" key="1">
    <source>
        <dbReference type="HAMAP-Rule" id="MF_00270"/>
    </source>
</evidence>
<evidence type="ECO:0000256" key="2">
    <source>
        <dbReference type="SAM" id="MobiDB-lite"/>
    </source>
</evidence>
<evidence type="ECO:0000305" key="3"/>
<feature type="chain" id="PRO_1000003493" description="Small ribosomal subunit protein bS18">
    <location>
        <begin position="1"/>
        <end position="91"/>
    </location>
</feature>
<feature type="region of interest" description="Disordered" evidence="2">
    <location>
        <begin position="1"/>
        <end position="27"/>
    </location>
</feature>
<feature type="compositionally biased region" description="Basic residues" evidence="2">
    <location>
        <begin position="11"/>
        <end position="21"/>
    </location>
</feature>
<reference key="1">
    <citation type="submission" date="2006-04" db="EMBL/GenBank/DDBJ databases">
        <title>Complete sequence of chromosome of Deinococcus geothermalis DSM 11300.</title>
        <authorList>
            <person name="Copeland A."/>
            <person name="Lucas S."/>
            <person name="Lapidus A."/>
            <person name="Barry K."/>
            <person name="Detter J.C."/>
            <person name="Glavina del Rio T."/>
            <person name="Hammon N."/>
            <person name="Israni S."/>
            <person name="Dalin E."/>
            <person name="Tice H."/>
            <person name="Pitluck S."/>
            <person name="Brettin T."/>
            <person name="Bruce D."/>
            <person name="Han C."/>
            <person name="Tapia R."/>
            <person name="Saunders E."/>
            <person name="Gilna P."/>
            <person name="Schmutz J."/>
            <person name="Larimer F."/>
            <person name="Land M."/>
            <person name="Hauser L."/>
            <person name="Kyrpides N."/>
            <person name="Kim E."/>
            <person name="Daly M.J."/>
            <person name="Fredrickson J.K."/>
            <person name="Makarova K.S."/>
            <person name="Gaidamakova E.K."/>
            <person name="Zhai M."/>
            <person name="Richardson P."/>
        </authorList>
    </citation>
    <scope>NUCLEOTIDE SEQUENCE [LARGE SCALE GENOMIC DNA]</scope>
    <source>
        <strain>DSM 11300 / CIP 105573 / AG-3a</strain>
    </source>
</reference>
<sequence length="91" mass="10669">MTQQSNTERKPRAKGPKRPRKPKVDPFSIGELEITDYKDVKMLRRFISDTGKILPRRRTGLSAKHQRRISQTIKIARQLALLPYTEKLVRK</sequence>
<name>RS18_DEIGD</name>